<name>R1A_MERS1</name>
<comment type="function">
    <text evidence="2">The replicase polyprotein of coronaviruses is a multifunctional protein: it contains the activities necessary for the transcription of negative stranded RNA, leader RNA, subgenomic mRNAs and progeny virion RNA as well as proteinases responsible for the cleavage of the polyprotein into functional products.</text>
</comment>
<comment type="function">
    <molecule>Host translation inhibitor nsp1</molecule>
    <text evidence="25">Promotes the degradation of host mRNAs by inducing an endonucleolytic RNA cleavage in template mRNAs, and inhibits of host mRNA translation, a function that is separable from its RNA cleavage activity. By suppressing host gene expression, nsp1 facilitates efficient viral gene expression in infected cells and evasion from host immune response.</text>
</comment>
<comment type="function">
    <molecule>Non-structural protein 2</molecule>
    <text evidence="2">May play a role in the modulation of host cell survival signaling pathway by interacting with host PHB and PHB2. Indeed, these two proteins play a role in maintaining the functional integrity of the mitochondria and protecting cells from various stresses.</text>
</comment>
<comment type="function">
    <molecule>Papain-like protease nsp3</molecule>
    <text evidence="2 24">Responsible for the cleavages located at the N-terminus of the replicase polyprotein. In addition, PL-PRO possesses a deubiquitinating/deISGylating activity and processes both 'Lys-48'- and 'Lys-63'-linked polyubiquitin chains from cellular substrates. Participates, together with nsp4, in the assembly of virally induced cytoplasmic double-membrane vesicles necessary for viral replication. Antagonizes innate immune induction of type I interferon by blocking the phosphorylation, dimerization and subsequent nuclear translocation of host IRF3. Also prevents host NF-kappa-B. signaling.</text>
</comment>
<comment type="function">
    <molecule>Non-structural protein 4</molecule>
    <text evidence="2">Participates in the assembly of virally-induced cytoplasmic double-membrane vesicles necessary for viral replication.</text>
</comment>
<comment type="function">
    <molecule>3C-like proteinase nsp5</molecule>
    <text evidence="2 8">Cleaves the C-terminus of replicase polyprotein at 11 sites. Recognizes substrates containing the core sequence [ILMVF]-Q-|-[SGACN]. Also able to bind an ADP-ribose-1''-phosphate (ADRP).</text>
</comment>
<comment type="function">
    <molecule>Non-structural protein 6</molecule>
    <text evidence="2">Plays a role in the initial induction of autophagosomes from host endoplasmic reticulum. Later, limits the expansion of these phagosomes that are no longer able to deliver viral components to lysosomes.</text>
</comment>
<comment type="function">
    <molecule>Non-structural protein 7</molecule>
    <text evidence="2">Forms a hexadecamer with nsp8 (8 subunits of each) that may participate in viral replication by acting as a primase. Alternatively, may synthesize substantially longer products than oligonucleotide primers.</text>
</comment>
<comment type="function">
    <molecule>Non-structural protein 8</molecule>
    <text evidence="2">Forms a hexadecamer with nsp7 (8 subunits of each) that may participate in viral replication by acting as a primase. Alternatively, may synthesize substantially longer products than oligonucleotide primers.</text>
</comment>
<comment type="function">
    <molecule>RNA-capping enzyme subunit nsp9</molecule>
    <text evidence="3">Catalytic subunit of viral RNA capping enzyme which catalyzes the RNA guanylyltransferase reaction for genomic and sub-genomic RNAs. The kinase-like NiRAN domain of NSP12 transfers RNA to the amino terminus of NSP9, forming a covalent RNA-protein intermediate. Subsequently, the NiRAN domain transfers RNA to GDP, forming the core cap structure GpppA-RNA. The NSP14 and NSP16 methyltransferases then add methyl groups to form functional cap structures.</text>
</comment>
<comment type="function">
    <molecule>Non-structural protein 10</molecule>
    <text evidence="2">Plays a pivotal role in viral transcription by stimulating both nsp14 3'-5' exoribonuclease and nsp16 2'-O-methyltransferase activities. Therefore plays an essential role in viral mRNAs cap methylation.</text>
</comment>
<comment type="catalytic activity">
    <molecule>Papain-like protease nsp3</molecule>
    <reaction evidence="3">
        <text>Thiol-dependent hydrolysis of ester, thioester, amide, peptide and isopeptide bonds formed by the C-terminal Gly of ubiquitin (a 76-residue protein attached to proteins as an intracellular targeting signal).</text>
        <dbReference type="EC" id="3.4.19.12"/>
    </reaction>
</comment>
<comment type="catalytic activity">
    <molecule>3C-like proteinase nsp5</molecule>
    <reaction evidence="3">
        <text>TSAVLQ-|-SGFRK-NH2 and SGVTFQ-|-GKFKK the two peptides corresponding to the two self-cleavage sites of the SARS 3C-like proteinase are the two most reactive peptide substrates. The enzyme exhibits a strong preference for substrates containing Gln at P1 position and Leu at P2 position.</text>
        <dbReference type="EC" id="3.4.22.69"/>
    </reaction>
</comment>
<comment type="catalytic activity">
    <molecule>RNA-capping enzyme subunit nsp9</molecule>
    <reaction evidence="3">
        <text>a 5'-end diphospho-ribonucleoside in mRNA + GTP + H(+) = a 5'-end (5'-triphosphoguanosine)-ribonucleoside in mRNA + diphosphate</text>
        <dbReference type="Rhea" id="RHEA:67012"/>
        <dbReference type="Rhea" id="RHEA-COMP:17165"/>
        <dbReference type="Rhea" id="RHEA-COMP:17166"/>
        <dbReference type="ChEBI" id="CHEBI:15378"/>
        <dbReference type="ChEBI" id="CHEBI:33019"/>
        <dbReference type="ChEBI" id="CHEBI:37565"/>
        <dbReference type="ChEBI" id="CHEBI:167616"/>
        <dbReference type="ChEBI" id="CHEBI:167617"/>
        <dbReference type="EC" id="2.7.7.50"/>
    </reaction>
    <physiologicalReaction direction="right-to-left" evidence="3">
        <dbReference type="Rhea" id="RHEA:67014"/>
    </physiologicalReaction>
</comment>
<comment type="subunit">
    <text evidence="2">Nsp2 interacts with host PHB and PHB2. 3CL-PRO exists as monomer and homodimer. Nsp4 interacts with PL-PRO and nsp6. Only the homodimer shows catalytic activity. Eight copies of nsp7 and eight copies of nsp8 assemble to form a heterohexadecamer dsRNA-encircling ring structure. Nsp9 is a dimer.</text>
</comment>
<comment type="interaction">
    <interactant intactId="EBI-25618448">
        <id>K9N638</id>
    </interactant>
    <interactant intactId="EBI-25487250">
        <id>PRO_0000037312</id>
        <label>rep</label>
        <dbReference type="UniProtKB" id="P0C6X7"/>
    </interactant>
    <organismsDiffer>true</organismsDiffer>
    <experiments>2</experiments>
</comment>
<comment type="interaction">
    <interactant intactId="EBI-25635184">
        <id>PRO_0000422456</id>
    </interactant>
    <interactant intactId="EBI-8345781">
        <id>Q64339</id>
        <label>Isg15</label>
    </interactant>
    <organismsDiffer>true</organismsDiffer>
    <experiments>2</experiments>
</comment>
<comment type="interaction">
    <interactant intactId="EBI-26366263">
        <id>PRO_0000422460</id>
    </interactant>
    <interactant intactId="EBI-26366276">
        <id>PRO_0000422461</id>
        <label>1a</label>
        <dbReference type="UniProtKB" id="K9N638"/>
    </interactant>
    <organismsDiffer>false</organismsDiffer>
    <experiments>2</experiments>
</comment>
<comment type="subcellular location">
    <molecule>Papain-like protease nsp3</molecule>
    <subcellularLocation>
        <location>Host membrane</location>
        <topology>Multi-pass membrane protein</topology>
    </subcellularLocation>
    <subcellularLocation>
        <location evidence="2">Host cytoplasm</location>
    </subcellularLocation>
</comment>
<comment type="subcellular location">
    <molecule>Non-structural protein 4</molecule>
    <subcellularLocation>
        <location>Host membrane</location>
        <topology>Multi-pass membrane protein</topology>
    </subcellularLocation>
    <subcellularLocation>
        <location>Host cytoplasm</location>
    </subcellularLocation>
    <text evidence="2">Localizes in virally-induced cytoplasmic double-membrane vesicles.</text>
</comment>
<comment type="subcellular location">
    <molecule>Non-structural protein 6</molecule>
    <subcellularLocation>
        <location evidence="26">Host membrane</location>
        <topology evidence="26">Multi-pass membrane protein</topology>
    </subcellularLocation>
</comment>
<comment type="subcellular location">
    <molecule>Non-structural protein 7</molecule>
    <subcellularLocation>
        <location evidence="1">Host cytoplasm</location>
        <location evidence="1">Host perinuclear region</location>
    </subcellularLocation>
    <text evidence="1">nsp7, nsp8, nsp9 and nsp10 are localized in cytoplasmic foci, largely perinuclear. Late in infection, they merge into confluent complexes (By similarity).</text>
</comment>
<comment type="subcellular location">
    <molecule>Non-structural protein 8</molecule>
    <subcellularLocation>
        <location evidence="1">Host cytoplasm</location>
        <location evidence="1">Host perinuclear region</location>
    </subcellularLocation>
    <text evidence="1">nsp7, nsp8, nsp9 and nsp10 are localized in cytoplasmic foci, largely perinuclear. Late in infection, they merge into confluent complexes (By similarity).</text>
</comment>
<comment type="subcellular location">
    <molecule>RNA-capping enzyme subunit nsp9</molecule>
    <subcellularLocation>
        <location evidence="1">Host cytoplasm</location>
        <location evidence="1">Host perinuclear region</location>
    </subcellularLocation>
    <text evidence="1">nsp7, nsp8, nsp9 and nsp10 are localized in cytoplasmic foci, largely perinuclear. Late in infection, they merge into confluent complexes (By similarity).</text>
</comment>
<comment type="subcellular location">
    <molecule>Non-structural protein 10</molecule>
    <subcellularLocation>
        <location evidence="1">Host cytoplasm</location>
        <location evidence="1">Host perinuclear region</location>
    </subcellularLocation>
    <text evidence="1">nsp7, nsp8, nsp9 and nsp10 are localized in cytoplasmic foci, largely perinuclear. Late in infection, they merge into confluent complexes (By similarity).</text>
</comment>
<comment type="alternative products">
    <event type="ribosomal frameshifting"/>
    <isoform>
        <id>K9N638-1</id>
        <name>Replicase polyprotein 1a</name>
        <name>pp1a</name>
        <name>ORF1a polyprotein</name>
        <sequence type="displayed"/>
    </isoform>
    <isoform>
        <id>K9N7C7-1</id>
        <name>Replicase polyprotein 1ab</name>
        <name>pp1ab</name>
        <sequence type="external"/>
    </isoform>
</comment>
<comment type="domain">
    <text>The hydrophobic domains (HD) could mediate the membrane association of the replication complex and thereby alter the architecture of the host cell membrane.</text>
</comment>
<comment type="PTM">
    <text evidence="1">Specific enzymatic cleavages in vivo by its own proteases yield mature proteins. 3CL-PRO and PL-PRO proteinases are autocatalytically processed (By similarity).</text>
</comment>
<comment type="miscellaneous">
    <molecule>Isoform Replicase polyprotein 1a</molecule>
    <text>Produced by conventional translation.</text>
</comment>
<comment type="similarity">
    <text evidence="26">Belongs to the coronaviruses polyprotein 1ab family.</text>
</comment>
<organismHost>
    <name type="scientific">Camelus dromedarius</name>
    <name type="common">Dromedary</name>
    <name type="synonym">Arabian camel</name>
    <dbReference type="NCBI Taxonomy" id="9838"/>
</organismHost>
<organismHost>
    <name type="scientific">Homo sapiens</name>
    <name type="common">Human</name>
    <dbReference type="NCBI Taxonomy" id="9606"/>
</organismHost>
<gene>
    <name type="ORF">1a</name>
</gene>
<feature type="chain" id="PRO_0000422454" description="Host translation inhibitor nsp1" evidence="1">
    <location>
        <begin position="1"/>
        <end position="193"/>
    </location>
</feature>
<feature type="chain" id="PRO_0000422455" description="Non-structural protein 2" evidence="1">
    <location>
        <begin position="194"/>
        <end position="853"/>
    </location>
</feature>
<feature type="chain" id="PRO_0000422456" description="Papain-like protease nsp3" evidence="1">
    <location>
        <begin position="854"/>
        <end position="2740"/>
    </location>
</feature>
<feature type="chain" id="PRO_0000422457" description="Non-structural protein 4" evidence="4">
    <location>
        <begin position="2741"/>
        <end position="3247"/>
    </location>
</feature>
<feature type="chain" id="PRO_0000422458" description="3C-like proteinase nsp5" evidence="1">
    <location>
        <begin position="3248"/>
        <end position="3553"/>
    </location>
</feature>
<feature type="chain" id="PRO_0000422459" description="Non-structural protein 6" evidence="1">
    <location>
        <begin position="3554"/>
        <end position="3845"/>
    </location>
</feature>
<feature type="chain" id="PRO_0000422460" description="Non-structural protein 7" evidence="1">
    <location>
        <begin position="3846"/>
        <end position="3928"/>
    </location>
</feature>
<feature type="chain" id="PRO_0000422461" description="Non-structural protein 8" evidence="1">
    <location>
        <begin position="3929"/>
        <end position="4127"/>
    </location>
</feature>
<feature type="chain" id="PRO_0000422462" description="RNA-capping enzyme subunit nsp9" evidence="1">
    <location>
        <begin position="4128"/>
        <end position="4237"/>
    </location>
</feature>
<feature type="chain" id="PRO_0000422463" description="Non-structural protein 10" evidence="1">
    <location>
        <begin position="4238"/>
        <end position="4377"/>
    </location>
</feature>
<feature type="chain" id="PRO_0000422464" description="Non-structural protein 11" evidence="1">
    <location>
        <begin position="4378"/>
        <end position="4391"/>
    </location>
</feature>
<feature type="transmembrane region" description="Helical" evidence="4">
    <location>
        <begin position="2105"/>
        <end position="2125"/>
    </location>
</feature>
<feature type="transmembrane region" description="Helical" evidence="4">
    <location>
        <begin position="2177"/>
        <end position="2197"/>
    </location>
</feature>
<feature type="transmembrane region" description="Helical" evidence="4">
    <location>
        <begin position="2281"/>
        <end position="2301"/>
    </location>
</feature>
<feature type="transmembrane region" description="Helical" evidence="4">
    <location>
        <begin position="2305"/>
        <end position="2325"/>
    </location>
</feature>
<feature type="transmembrane region" description="Helical" evidence="4">
    <location>
        <begin position="2330"/>
        <end position="2350"/>
    </location>
</feature>
<feature type="transmembrane region" description="Helical" evidence="4">
    <location>
        <begin position="2757"/>
        <end position="2777"/>
    </location>
</feature>
<feature type="transmembrane region" description="Helical" evidence="4">
    <location>
        <begin position="3028"/>
        <end position="3048"/>
    </location>
</feature>
<feature type="transmembrane region" description="Helical" evidence="4">
    <location>
        <begin position="3062"/>
        <end position="3082"/>
    </location>
</feature>
<feature type="transmembrane region" description="Helical" evidence="4">
    <location>
        <begin position="3104"/>
        <end position="3124"/>
    </location>
</feature>
<feature type="transmembrane region" description="Helical" evidence="4">
    <location>
        <begin position="3125"/>
        <end position="3145"/>
    </location>
</feature>
<feature type="transmembrane region" description="Helical" evidence="4">
    <location>
        <begin position="3559"/>
        <end position="3579"/>
    </location>
</feature>
<feature type="transmembrane region" description="Helical" evidence="4">
    <location>
        <begin position="3593"/>
        <end position="3613"/>
    </location>
</feature>
<feature type="transmembrane region" description="Helical" evidence="4">
    <location>
        <begin position="3618"/>
        <end position="3638"/>
    </location>
</feature>
<feature type="transmembrane region" description="Helical" evidence="4">
    <location>
        <begin position="3664"/>
        <end position="3684"/>
    </location>
</feature>
<feature type="transmembrane region" description="Helical" evidence="4">
    <location>
        <begin position="3691"/>
        <end position="3711"/>
    </location>
</feature>
<feature type="transmembrane region" description="Helical" evidence="4">
    <location>
        <begin position="3740"/>
        <end position="3760"/>
    </location>
</feature>
<feature type="transmembrane region" description="Helical" evidence="4">
    <location>
        <begin position="3765"/>
        <end position="3785"/>
    </location>
</feature>
<feature type="domain" description="CoV Nsp1 globular" evidence="16">
    <location>
        <begin position="25"/>
        <end position="149"/>
    </location>
</feature>
<feature type="domain" description="BetaCoV Nsp1 C-terminal" evidence="17">
    <location>
        <begin position="165"/>
        <end position="193"/>
    </location>
</feature>
<feature type="domain" description="CoV Nsp2 N-terminal" evidence="18">
    <location>
        <begin position="195"/>
        <end position="475"/>
    </location>
</feature>
<feature type="domain" description="CoV Nsp2 middle" evidence="19">
    <location>
        <begin position="481"/>
        <end position="715"/>
    </location>
</feature>
<feature type="domain" description="CoV Nsp2 C-terminal" evidence="20">
    <location>
        <begin position="717"/>
        <end position="853"/>
    </location>
</feature>
<feature type="domain" description="Ubiquitin-like 1" evidence="5">
    <location>
        <begin position="857"/>
        <end position="966"/>
    </location>
</feature>
<feature type="domain" description="Macro 1" evidence="7">
    <location>
        <begin position="1110"/>
        <end position="1276"/>
    </location>
</feature>
<feature type="domain" description="Macro 2" evidence="7">
    <location>
        <begin position="1278"/>
        <end position="1404"/>
    </location>
</feature>
<feature type="domain" description="DPUP" evidence="9">
    <location>
        <begin position="1404"/>
        <end position="1477"/>
    </location>
</feature>
<feature type="domain" description="Ubiquitin-like 2" evidence="5">
    <location>
        <begin position="1482"/>
        <end position="1537"/>
    </location>
</feature>
<feature type="domain" description="Peptidase C16" evidence="6">
    <location>
        <begin position="1552"/>
        <end position="1823"/>
    </location>
</feature>
<feature type="domain" description="Nucleic acid-binding" evidence="10">
    <location>
        <begin position="1837"/>
        <end position="1954"/>
    </location>
</feature>
<feature type="domain" description="G2M" evidence="23">
    <location>
        <begin position="1967"/>
        <end position="2088"/>
    </location>
</feature>
<feature type="domain" description="3Ecto" evidence="22">
    <location>
        <begin position="2214"/>
        <end position="2280"/>
    </location>
</feature>
<feature type="domain" description="CoV Nsp3 Y" evidence="21">
    <location>
        <begin position="2364"/>
        <end position="2737"/>
    </location>
</feature>
<feature type="domain" description="Nsp4C" evidence="11">
    <location>
        <begin position="3151"/>
        <end position="3247"/>
    </location>
</feature>
<feature type="domain" description="Peptidase C30" evidence="8">
    <location>
        <begin position="3248"/>
        <end position="3553"/>
    </location>
</feature>
<feature type="domain" description="RdRp Nsp7 cofactor" evidence="12">
    <location>
        <begin position="3846"/>
        <end position="3928"/>
    </location>
</feature>
<feature type="domain" description="RdRp Nsp8 cofactor" evidence="13">
    <location>
        <begin position="3929"/>
        <end position="4127"/>
    </location>
</feature>
<feature type="domain" description="Nsp9 ssRNA-binding" evidence="14">
    <location>
        <begin position="4128"/>
        <end position="4237"/>
    </location>
</feature>
<feature type="domain" description="ExoN/MTase coactivator" evidence="15">
    <location>
        <begin position="4238"/>
        <end position="4377"/>
    </location>
</feature>
<feature type="zinc finger region" description="C4-type" evidence="6">
    <location>
        <begin position="1672"/>
        <end position="1709"/>
    </location>
</feature>
<feature type="zinc finger region">
    <location>
        <begin position="4311"/>
        <end position="4327"/>
    </location>
</feature>
<feature type="zinc finger region">
    <location>
        <begin position="4354"/>
        <end position="4367"/>
    </location>
</feature>
<feature type="region of interest" description="C4" evidence="18">
    <location>
        <begin position="338"/>
        <end position="359"/>
    </location>
</feature>
<feature type="region of interest" description="C2HC" evidence="18">
    <location>
        <begin position="383"/>
        <end position="436"/>
    </location>
</feature>
<feature type="region of interest" description="HD1">
    <location>
        <begin position="2040"/>
        <end position="2363"/>
    </location>
</feature>
<feature type="region of interest" description="Y1" evidence="21">
    <location>
        <begin position="2364"/>
        <end position="2454"/>
    </location>
</feature>
<feature type="region of interest" description="ZF1" evidence="21">
    <location>
        <begin position="2368"/>
        <end position="2381"/>
    </location>
</feature>
<feature type="region of interest" description="ZF2" evidence="21">
    <location>
        <begin position="2414"/>
        <end position="2424"/>
    </location>
</feature>
<feature type="region of interest" description="CoV-Y" evidence="21">
    <location>
        <begin position="2455"/>
        <end position="2737"/>
    </location>
</feature>
<feature type="region of interest" description="Y2" evidence="21">
    <location>
        <begin position="2455"/>
        <end position="2553"/>
    </location>
</feature>
<feature type="region of interest" description="Y3" evidence="21">
    <location>
        <begin position="2554"/>
        <end position="2636"/>
    </location>
</feature>
<feature type="region of interest" description="Y4" evidence="21">
    <location>
        <begin position="2637"/>
        <end position="2737"/>
    </location>
</feature>
<feature type="region of interest" description="HD2">
    <location>
        <begin position="2761"/>
        <end position="3171"/>
    </location>
</feature>
<feature type="region of interest" description="HD3">
    <location>
        <begin position="3571"/>
        <end position="3785"/>
    </location>
</feature>
<feature type="active site" description="For PL-PRO activity" evidence="6">
    <location>
        <position position="1592"/>
    </location>
</feature>
<feature type="active site" description="For PL-PRO activity" evidence="6">
    <location>
        <position position="1759"/>
    </location>
</feature>
<feature type="active site" description="For PL-PRO activity" evidence="6">
    <location>
        <position position="1774"/>
    </location>
</feature>
<feature type="active site" description="For 3CL-PRO activity" evidence="8">
    <location>
        <position position="3288"/>
    </location>
</feature>
<feature type="active site" description="For 3CL-PRO activity" evidence="8">
    <location>
        <position position="3395"/>
    </location>
</feature>
<feature type="binding site" evidence="18">
    <location>
        <position position="338"/>
    </location>
    <ligand>
        <name>Zn(2+)</name>
        <dbReference type="ChEBI" id="CHEBI:29105"/>
        <label>1</label>
    </ligand>
</feature>
<feature type="binding site" evidence="18">
    <location>
        <position position="341"/>
    </location>
    <ligand>
        <name>Zn(2+)</name>
        <dbReference type="ChEBI" id="CHEBI:29105"/>
        <label>1</label>
    </ligand>
</feature>
<feature type="binding site" evidence="18">
    <location>
        <position position="357"/>
    </location>
    <ligand>
        <name>Zn(2+)</name>
        <dbReference type="ChEBI" id="CHEBI:29105"/>
        <label>1</label>
    </ligand>
</feature>
<feature type="binding site" evidence="18">
    <location>
        <position position="359"/>
    </location>
    <ligand>
        <name>Zn(2+)</name>
        <dbReference type="ChEBI" id="CHEBI:29105"/>
        <label>1</label>
    </ligand>
</feature>
<feature type="binding site" evidence="18">
    <location>
        <position position="383"/>
    </location>
    <ligand>
        <name>Zn(2+)</name>
        <dbReference type="ChEBI" id="CHEBI:29105"/>
        <label>2</label>
    </ligand>
</feature>
<feature type="binding site" evidence="18">
    <location>
        <position position="386"/>
    </location>
    <ligand>
        <name>Zn(2+)</name>
        <dbReference type="ChEBI" id="CHEBI:29105"/>
        <label>2</label>
    </ligand>
</feature>
<feature type="binding site" evidence="18">
    <location>
        <position position="400"/>
    </location>
    <ligand>
        <name>Zn(2+)</name>
        <dbReference type="ChEBI" id="CHEBI:29105"/>
        <label>2</label>
    </ligand>
</feature>
<feature type="binding site" evidence="18">
    <location>
        <position position="436"/>
    </location>
    <ligand>
        <name>Zn(2+)</name>
        <dbReference type="ChEBI" id="CHEBI:29105"/>
        <label>2</label>
    </ligand>
</feature>
<feature type="binding site" evidence="6">
    <location>
        <position position="1672"/>
    </location>
    <ligand>
        <name>Zn(2+)</name>
        <dbReference type="ChEBI" id="CHEBI:29105"/>
        <label>3</label>
    </ligand>
</feature>
<feature type="binding site" evidence="6">
    <location>
        <position position="1675"/>
    </location>
    <ligand>
        <name>Zn(2+)</name>
        <dbReference type="ChEBI" id="CHEBI:29105"/>
        <label>3</label>
    </ligand>
</feature>
<feature type="binding site" evidence="6">
    <location>
        <position position="1707"/>
    </location>
    <ligand>
        <name>Zn(2+)</name>
        <dbReference type="ChEBI" id="CHEBI:29105"/>
        <label>3</label>
    </ligand>
</feature>
<feature type="binding site" evidence="6">
    <location>
        <position position="1709"/>
    </location>
    <ligand>
        <name>Zn(2+)</name>
        <dbReference type="ChEBI" id="CHEBI:29105"/>
        <label>3</label>
    </ligand>
</feature>
<feature type="binding site" evidence="21">
    <location>
        <position position="2368"/>
    </location>
    <ligand>
        <name>Zn(2+)</name>
        <dbReference type="ChEBI" id="CHEBI:29105"/>
        <label>4</label>
    </ligand>
</feature>
<feature type="binding site" evidence="21">
    <location>
        <position position="2373"/>
    </location>
    <ligand>
        <name>Zn(2+)</name>
        <dbReference type="ChEBI" id="CHEBI:29105"/>
        <label>4</label>
    </ligand>
</feature>
<feature type="binding site" evidence="21">
    <location>
        <position position="2378"/>
    </location>
    <ligand>
        <name>Zn(2+)</name>
        <dbReference type="ChEBI" id="CHEBI:29105"/>
        <label>4</label>
    </ligand>
</feature>
<feature type="binding site" evidence="21">
    <location>
        <position position="2381"/>
    </location>
    <ligand>
        <name>Zn(2+)</name>
        <dbReference type="ChEBI" id="CHEBI:29105"/>
        <label>4</label>
    </ligand>
</feature>
<feature type="binding site" evidence="21">
    <location>
        <position position="2414"/>
    </location>
    <ligand>
        <name>Zn(2+)</name>
        <dbReference type="ChEBI" id="CHEBI:29105"/>
        <label>5</label>
    </ligand>
</feature>
<feature type="binding site" evidence="21">
    <location>
        <position position="2417"/>
    </location>
    <ligand>
        <name>Zn(2+)</name>
        <dbReference type="ChEBI" id="CHEBI:29105"/>
        <label>5</label>
    </ligand>
</feature>
<feature type="binding site" evidence="21">
    <location>
        <position position="2421"/>
    </location>
    <ligand>
        <name>Zn(2+)</name>
        <dbReference type="ChEBI" id="CHEBI:29105"/>
        <label>5</label>
    </ligand>
</feature>
<feature type="binding site" evidence="21">
    <location>
        <position position="2424"/>
    </location>
    <ligand>
        <name>Zn(2+)</name>
        <dbReference type="ChEBI" id="CHEBI:29105"/>
        <label>5</label>
    </ligand>
</feature>
<feature type="binding site" evidence="15">
    <location>
        <position position="4311"/>
    </location>
    <ligand>
        <name>Zn(2+)</name>
        <dbReference type="ChEBI" id="CHEBI:29105"/>
        <label>6</label>
    </ligand>
</feature>
<feature type="binding site" evidence="15">
    <location>
        <position position="4314"/>
    </location>
    <ligand>
        <name>Zn(2+)</name>
        <dbReference type="ChEBI" id="CHEBI:29105"/>
        <label>6</label>
    </ligand>
</feature>
<feature type="binding site" evidence="15">
    <location>
        <position position="4320"/>
    </location>
    <ligand>
        <name>Zn(2+)</name>
        <dbReference type="ChEBI" id="CHEBI:29105"/>
        <label>6</label>
    </ligand>
</feature>
<feature type="binding site" evidence="15">
    <location>
        <position position="4327"/>
    </location>
    <ligand>
        <name>Zn(2+)</name>
        <dbReference type="ChEBI" id="CHEBI:29105"/>
        <label>6</label>
    </ligand>
</feature>
<feature type="binding site" evidence="15">
    <location>
        <position position="4354"/>
    </location>
    <ligand>
        <name>Zn(2+)</name>
        <dbReference type="ChEBI" id="CHEBI:29105"/>
        <label>7</label>
    </ligand>
</feature>
<feature type="binding site" evidence="15">
    <location>
        <position position="4357"/>
    </location>
    <ligand>
        <name>Zn(2+)</name>
        <dbReference type="ChEBI" id="CHEBI:29105"/>
        <label>7</label>
    </ligand>
</feature>
<feature type="binding site" evidence="15">
    <location>
        <position position="4365"/>
    </location>
    <ligand>
        <name>Zn(2+)</name>
        <dbReference type="ChEBI" id="CHEBI:29105"/>
        <label>7</label>
    </ligand>
</feature>
<feature type="binding site" evidence="15">
    <location>
        <position position="4367"/>
    </location>
    <ligand>
        <name>Zn(2+)</name>
        <dbReference type="ChEBI" id="CHEBI:29105"/>
        <label>7</label>
    </ligand>
</feature>
<feature type="site" description="Cleavage" evidence="1">
    <location>
        <begin position="193"/>
        <end position="194"/>
    </location>
</feature>
<feature type="site" description="Cleavage; by PL-PRO" evidence="1">
    <location>
        <begin position="853"/>
        <end position="854"/>
    </location>
</feature>
<feature type="site" description="Cleavage; by PL-PRO" evidence="1">
    <location>
        <begin position="2740"/>
        <end position="2741"/>
    </location>
</feature>
<feature type="site" description="Cleavage; by 3CL-PRO" evidence="1">
    <location>
        <begin position="3247"/>
        <end position="3248"/>
    </location>
</feature>
<feature type="site" description="Cleavage; by 3CL-PRO" evidence="1">
    <location>
        <begin position="3553"/>
        <end position="3554"/>
    </location>
</feature>
<feature type="site" description="Cleavage; by 3CL-PRO" evidence="1">
    <location>
        <begin position="3845"/>
        <end position="3846"/>
    </location>
</feature>
<feature type="site" description="Cleavage; by 3CL-PRO" evidence="1">
    <location>
        <begin position="3928"/>
        <end position="3929"/>
    </location>
</feature>
<feature type="site" description="Cleavage; by 3CL-PRO" evidence="1">
    <location>
        <begin position="4127"/>
        <end position="4128"/>
    </location>
</feature>
<feature type="site" description="Cleavage; by 3CL-PRO" evidence="1">
    <location>
        <begin position="4237"/>
        <end position="4238"/>
    </location>
</feature>
<feature type="site" description="Cleavage; by 3CL-PRO" evidence="1">
    <location>
        <begin position="4377"/>
        <end position="4378"/>
    </location>
</feature>
<feature type="disulfide bond" evidence="22">
    <location>
        <begin position="2230"/>
        <end position="2258"/>
    </location>
</feature>
<feature type="disulfide bond" evidence="22">
    <location>
        <begin position="2248"/>
        <end position="2255"/>
    </location>
</feature>
<feature type="helix" evidence="28">
    <location>
        <begin position="1110"/>
        <end position="1113"/>
    </location>
</feature>
<feature type="strand" evidence="28">
    <location>
        <begin position="1116"/>
        <end position="1118"/>
    </location>
</feature>
<feature type="strand" evidence="28">
    <location>
        <begin position="1120"/>
        <end position="1128"/>
    </location>
</feature>
<feature type="helix" evidence="28">
    <location>
        <begin position="1130"/>
        <end position="1134"/>
    </location>
</feature>
<feature type="strand" evidence="28">
    <location>
        <begin position="1141"/>
        <end position="1146"/>
    </location>
</feature>
<feature type="helix" evidence="28">
    <location>
        <begin position="1156"/>
        <end position="1163"/>
    </location>
</feature>
<feature type="turn" evidence="28">
    <location>
        <begin position="1164"/>
        <end position="1166"/>
    </location>
</feature>
<feature type="helix" evidence="28">
    <location>
        <begin position="1167"/>
        <end position="1179"/>
    </location>
</feature>
<feature type="strand" evidence="28">
    <location>
        <begin position="1187"/>
        <end position="1191"/>
    </location>
</feature>
<feature type="strand" evidence="28">
    <location>
        <begin position="1195"/>
        <end position="1203"/>
    </location>
</feature>
<feature type="helix" evidence="28">
    <location>
        <begin position="1207"/>
        <end position="1209"/>
    </location>
</feature>
<feature type="helix" evidence="28">
    <location>
        <begin position="1213"/>
        <end position="1215"/>
    </location>
</feature>
<feature type="helix" evidence="28">
    <location>
        <begin position="1216"/>
        <end position="1221"/>
    </location>
</feature>
<feature type="helix" evidence="28">
    <location>
        <begin position="1222"/>
        <end position="1225"/>
    </location>
</feature>
<feature type="strand" evidence="28">
    <location>
        <begin position="1226"/>
        <end position="1231"/>
    </location>
</feature>
<feature type="helix" evidence="28">
    <location>
        <begin position="1243"/>
        <end position="1253"/>
    </location>
</feature>
<feature type="strand" evidence="28">
    <location>
        <begin position="1256"/>
        <end position="1263"/>
    </location>
</feature>
<feature type="helix" evidence="28">
    <location>
        <begin position="1265"/>
        <end position="1272"/>
    </location>
</feature>
<feature type="strand" evidence="27">
    <location>
        <begin position="1484"/>
        <end position="1494"/>
    </location>
</feature>
<feature type="strand" evidence="27">
    <location>
        <begin position="1496"/>
        <end position="1505"/>
    </location>
</feature>
<feature type="helix" evidence="27">
    <location>
        <begin position="1507"/>
        <end position="1510"/>
    </location>
</feature>
<feature type="strand" evidence="27">
    <location>
        <begin position="1513"/>
        <end position="1516"/>
    </location>
</feature>
<feature type="helix" evidence="27">
    <location>
        <begin position="1528"/>
        <end position="1530"/>
    </location>
</feature>
<feature type="strand" evidence="27">
    <location>
        <begin position="1534"/>
        <end position="1537"/>
    </location>
</feature>
<feature type="helix" evidence="27">
    <location>
        <begin position="1543"/>
        <end position="1553"/>
    </location>
</feature>
<feature type="helix" evidence="27">
    <location>
        <begin position="1560"/>
        <end position="1570"/>
    </location>
</feature>
<feature type="turn" evidence="27">
    <location>
        <begin position="1571"/>
        <end position="1573"/>
    </location>
</feature>
<feature type="strand" evidence="27">
    <location>
        <begin position="1576"/>
        <end position="1579"/>
    </location>
</feature>
<feature type="strand" evidence="27">
    <location>
        <begin position="1582"/>
        <end position="1585"/>
    </location>
</feature>
<feature type="turn" evidence="27">
    <location>
        <begin position="1589"/>
        <end position="1591"/>
    </location>
</feature>
<feature type="helix" evidence="27">
    <location>
        <begin position="1592"/>
        <end position="1603"/>
    </location>
</feature>
<feature type="strand" evidence="27">
    <location>
        <begin position="1607"/>
        <end position="1611"/>
    </location>
</feature>
<feature type="helix" evidence="27">
    <location>
        <begin position="1612"/>
        <end position="1622"/>
    </location>
</feature>
<feature type="helix" evidence="27">
    <location>
        <begin position="1627"/>
        <end position="1636"/>
    </location>
</feature>
<feature type="helix" evidence="27">
    <location>
        <begin position="1647"/>
        <end position="1655"/>
    </location>
</feature>
<feature type="strand" evidence="27">
    <location>
        <begin position="1658"/>
        <end position="1662"/>
    </location>
</feature>
<feature type="strand" evidence="27">
    <location>
        <begin position="1665"/>
        <end position="1672"/>
    </location>
</feature>
<feature type="turn" evidence="27">
    <location>
        <begin position="1673"/>
        <end position="1675"/>
    </location>
</feature>
<feature type="strand" evidence="27">
    <location>
        <begin position="1676"/>
        <end position="1683"/>
    </location>
</feature>
<feature type="helix" evidence="27">
    <location>
        <begin position="1684"/>
        <end position="1687"/>
    </location>
</feature>
<feature type="strand" evidence="27">
    <location>
        <begin position="1689"/>
        <end position="1692"/>
    </location>
</feature>
<feature type="helix" evidence="27">
    <location>
        <begin position="1696"/>
        <end position="1699"/>
    </location>
</feature>
<feature type="strand" evidence="27">
    <location>
        <begin position="1703"/>
        <end position="1706"/>
    </location>
</feature>
<feature type="strand" evidence="27">
    <location>
        <begin position="1710"/>
        <end position="1740"/>
    </location>
</feature>
<feature type="strand" evidence="27">
    <location>
        <begin position="1745"/>
        <end position="1751"/>
    </location>
</feature>
<feature type="strand" evidence="27">
    <location>
        <begin position="1759"/>
        <end position="1766"/>
    </location>
</feature>
<feature type="strand" evidence="27">
    <location>
        <begin position="1769"/>
        <end position="1773"/>
    </location>
</feature>
<feature type="strand" evidence="27">
    <location>
        <begin position="1780"/>
        <end position="1799"/>
    </location>
</feature>
<feature type="helix" evidence="30">
    <location>
        <begin position="3258"/>
        <end position="3261"/>
    </location>
</feature>
<feature type="strand" evidence="30">
    <location>
        <begin position="3264"/>
        <end position="3269"/>
    </location>
</feature>
<feature type="strand" evidence="30">
    <location>
        <begin position="3272"/>
        <end position="3279"/>
    </location>
</feature>
<feature type="strand" evidence="30">
    <location>
        <begin position="3282"/>
        <end position="3286"/>
    </location>
</feature>
<feature type="helix" evidence="30">
    <location>
        <begin position="3287"/>
        <end position="3290"/>
    </location>
</feature>
<feature type="helix" evidence="30">
    <location>
        <begin position="3293"/>
        <end position="3295"/>
    </location>
</feature>
<feature type="strand" evidence="29">
    <location>
        <begin position="3296"/>
        <end position="3298"/>
    </location>
</feature>
<feature type="helix" evidence="30">
    <location>
        <begin position="3301"/>
        <end position="3306"/>
    </location>
</feature>
<feature type="helix" evidence="30">
    <location>
        <begin position="3310"/>
        <end position="3312"/>
    </location>
</feature>
<feature type="strand" evidence="30">
    <location>
        <begin position="3313"/>
        <end position="3317"/>
    </location>
</feature>
<feature type="strand" evidence="30">
    <location>
        <begin position="3319"/>
        <end position="3321"/>
    </location>
</feature>
<feature type="strand" evidence="30">
    <location>
        <begin position="3323"/>
        <end position="3325"/>
    </location>
</feature>
<feature type="strand" evidence="30">
    <location>
        <begin position="3327"/>
        <end position="3333"/>
    </location>
</feature>
<feature type="strand" evidence="30">
    <location>
        <begin position="3336"/>
        <end position="3343"/>
    </location>
</feature>
<feature type="strand" evidence="30">
    <location>
        <begin position="3350"/>
        <end position="3353"/>
    </location>
</feature>
<feature type="strand" evidence="30">
    <location>
        <begin position="3361"/>
        <end position="3368"/>
    </location>
</feature>
<feature type="strand" evidence="30">
    <location>
        <begin position="3371"/>
        <end position="3379"/>
    </location>
</feature>
<feature type="strand" evidence="30">
    <location>
        <begin position="3398"/>
        <end position="3403"/>
    </location>
</feature>
<feature type="strand" evidence="30">
    <location>
        <begin position="3406"/>
        <end position="3418"/>
    </location>
</feature>
<feature type="strand" evidence="30">
    <location>
        <begin position="3421"/>
        <end position="3425"/>
    </location>
</feature>
<feature type="helix" evidence="30">
    <location>
        <begin position="3432"/>
        <end position="3434"/>
    </location>
</feature>
<feature type="strand" evidence="30">
    <location>
        <begin position="3437"/>
        <end position="3440"/>
    </location>
</feature>
<feature type="helix" evidence="30">
    <location>
        <begin position="3451"/>
        <end position="3463"/>
    </location>
</feature>
<feature type="helix" evidence="30">
    <location>
        <begin position="3477"/>
        <end position="3485"/>
    </location>
</feature>
<feature type="turn" evidence="30">
    <location>
        <begin position="3486"/>
        <end position="3488"/>
    </location>
</feature>
<feature type="helix" evidence="30">
    <location>
        <begin position="3496"/>
        <end position="3505"/>
    </location>
</feature>
<feature type="helix" evidence="30">
    <location>
        <begin position="3509"/>
        <end position="3519"/>
    </location>
</feature>
<feature type="strand" evidence="30">
    <location>
        <begin position="3531"/>
        <end position="3533"/>
    </location>
</feature>
<feature type="helix" evidence="30">
    <location>
        <begin position="3540"/>
        <end position="3548"/>
    </location>
</feature>
<evidence type="ECO:0000250" key="1"/>
<evidence type="ECO:0000250" key="2">
    <source>
        <dbReference type="UniProtKB" id="P0C6X7"/>
    </source>
</evidence>
<evidence type="ECO:0000250" key="3">
    <source>
        <dbReference type="UniProtKB" id="P0DTC1"/>
    </source>
</evidence>
<evidence type="ECO:0000255" key="4"/>
<evidence type="ECO:0000255" key="5">
    <source>
        <dbReference type="PROSITE-ProRule" id="PRU00214"/>
    </source>
</evidence>
<evidence type="ECO:0000255" key="6">
    <source>
        <dbReference type="PROSITE-ProRule" id="PRU00444"/>
    </source>
</evidence>
<evidence type="ECO:0000255" key="7">
    <source>
        <dbReference type="PROSITE-ProRule" id="PRU00490"/>
    </source>
</evidence>
<evidence type="ECO:0000255" key="8">
    <source>
        <dbReference type="PROSITE-ProRule" id="PRU00772"/>
    </source>
</evidence>
<evidence type="ECO:0000255" key="9">
    <source>
        <dbReference type="PROSITE-ProRule" id="PRU01289"/>
    </source>
</evidence>
<evidence type="ECO:0000255" key="10">
    <source>
        <dbReference type="PROSITE-ProRule" id="PRU01290"/>
    </source>
</evidence>
<evidence type="ECO:0000255" key="11">
    <source>
        <dbReference type="PROSITE-ProRule" id="PRU01291"/>
    </source>
</evidence>
<evidence type="ECO:0000255" key="12">
    <source>
        <dbReference type="PROSITE-ProRule" id="PRU01294"/>
    </source>
</evidence>
<evidence type="ECO:0000255" key="13">
    <source>
        <dbReference type="PROSITE-ProRule" id="PRU01295"/>
    </source>
</evidence>
<evidence type="ECO:0000255" key="14">
    <source>
        <dbReference type="PROSITE-ProRule" id="PRU01296"/>
    </source>
</evidence>
<evidence type="ECO:0000255" key="15">
    <source>
        <dbReference type="PROSITE-ProRule" id="PRU01297"/>
    </source>
</evidence>
<evidence type="ECO:0000255" key="16">
    <source>
        <dbReference type="PROSITE-ProRule" id="PRU01307"/>
    </source>
</evidence>
<evidence type="ECO:0000255" key="17">
    <source>
        <dbReference type="PROSITE-ProRule" id="PRU01308"/>
    </source>
</evidence>
<evidence type="ECO:0000255" key="18">
    <source>
        <dbReference type="PROSITE-ProRule" id="PRU01333"/>
    </source>
</evidence>
<evidence type="ECO:0000255" key="19">
    <source>
        <dbReference type="PROSITE-ProRule" id="PRU01334"/>
    </source>
</evidence>
<evidence type="ECO:0000255" key="20">
    <source>
        <dbReference type="PROSITE-ProRule" id="PRU01335"/>
    </source>
</evidence>
<evidence type="ECO:0000255" key="21">
    <source>
        <dbReference type="PROSITE-ProRule" id="PRU01336"/>
    </source>
</evidence>
<evidence type="ECO:0000255" key="22">
    <source>
        <dbReference type="PROSITE-ProRule" id="PRU01337"/>
    </source>
</evidence>
<evidence type="ECO:0000255" key="23">
    <source>
        <dbReference type="PROSITE-ProRule" id="PRU01338"/>
    </source>
</evidence>
<evidence type="ECO:0000269" key="24">
    <source>
    </source>
</evidence>
<evidence type="ECO:0000269" key="25">
    <source>
    </source>
</evidence>
<evidence type="ECO:0000305" key="26"/>
<evidence type="ECO:0007829" key="27">
    <source>
        <dbReference type="PDB" id="4R3D"/>
    </source>
</evidence>
<evidence type="ECO:0007829" key="28">
    <source>
        <dbReference type="PDB" id="5DUS"/>
    </source>
</evidence>
<evidence type="ECO:0007829" key="29">
    <source>
        <dbReference type="PDB" id="5WKL"/>
    </source>
</evidence>
<evidence type="ECO:0007829" key="30">
    <source>
        <dbReference type="PDB" id="9BOO"/>
    </source>
</evidence>
<sequence length="4391" mass="486059">MSFVAGVTAQGARGTYRAALNSEKHQDHVSLTVPLCGSGNLVEKLSPWFMDGENAYEVVKAMLLKKEPLLYVPIRLAGHTRHLPGPRVYLVERLIACENPFMVNQLAYSSSANGSLVGTTLQGKPIGMFFPYDIELVTGKQNILLRKYGRGGYHYTPFHYERDNTSCPEWMDDFEADPKGKYAQNLLKKLIGGDVTPVDQYMCGVDGKPISAYAFLMAKDGITKLADVEADVAARADDEGFITLKNNLYRLVWHVERKDVPYPKQSIFTINSVVQKDGVENTPPHYFTLGCKILTLTPRNKWSGVSDLSLKQKLLYTFYGKESLENPTYIYHSAFIECGSCGNDSWLTGNAIQGFACGCGASYTANDVEVQSSGMIKPNALLCATCPFAKGDSCSSNCKHSVAQLVSYLSERCNVIADSKSFTLIFGGVAYAYFGCEEGTMYFVPRAKSVVSRIGDSIFTGCTGSWNKVTQIANMFLEQTQHSLNFVGEFVVNDVVLAILSGTTTNVDKIRQLLKGVTLDKLRDYLADYDVAVTAGPFMDNAINVGGTGLQYAAITAPYVVLTGLGESFKKVATIPYKVCNSVKDTLTYYAHSVLYRVFPYDMDSGVSSFSELLFDCVDLSVASTYFLVRLLQDKTGDFMSTIITSCQTAVSKLLDTCFEATEATFNFLLDLAGLFRIFLRNAYVYTSQGFVVVNGKVSTLVKQVLDLLNKGMQLLHTKVSWAGSNISAVIYSGRESLIFPSGTYYCVTTKAKSVQQDLDVILPGEFSKKQLGLLQPTDNSTTVSVTVSSNMVETVVGQLEQTNMHSPDVIVGDYVIISEKLFVRSKEEDGFAFYPACTNGHAVPTLFRLKGGAPVKKVAFGGDQVHEVAAVRSVTVEYNIHAVLDTLLASSSLRTFVVDKSLSIEEFADVVKEQVSDLLVKLLRGMPIPDFDLDDFIDAPCYCFNAEGDASWSSTMIFSLHPVECDEECSEVEASDLEEGESECISETSTEQVDVSHEISDDEWAAAVDEAFPLDEAEDVTESVQEEAQPVEVPVEDIAQVVIADTLQETPVVSDTVEVPPQVVKLPSEPQTIQPEVKEVAPVYEADTEQTQSVTVKPKRLRKKRNVDPLSNFEHKVITECVTIVLGDAIQVAKCYGESVLVNAANTHLKHGGGIAGAINAASKGAVQKESDEYILAKGPLQVGDSVLLQGHSLAKNILHVVGPDARAKQDVSLLSKCYKAMNAYPLVVTPLVSAGIFGVKPAVSFDYLIREAKTRVLVVVNSQDVYKSLTIVDIPQSLTFSYDGLRGAIRKAKDYGFTVFVCTDNSANTKVLRNKGVDYTKKFLTVDGVQYYCYTSKDTLDDILQQANKSVGIISMPLGYVSHGLDLIQAGSVVRRVNVPYVCLLANKEQEAILMSEDVKLNPSEDFIKHVRTNGGYNSWHLVEGELLVQDLRLNKLLHWSDQTICYKDSVFYVVKNSTAFPFETLSACRAYLDSRTTQQLTIEVLVTVDGVNFRTVVLNNKNTYRSQLGCVFFNGADISDTIPDEKQNGHSLYLADNLTADETKALKELYGPVDPTFLHRFYSLKAAVHKWKMVVCDKVRSLKLSDNNCYLNAVIMTLDLLKDIKFVIPALQHAFMKHKGGDSTDFIALIMAYGNCTFGAPDDASRLLHTVLAKAELCCSARMVWREWCNVCGIKDVVLQGLKACCYVGVQTVEDLRARMTYVCQCGGERHRQIVEHTTPWLLLSGTPNEKLVTTSTAPDFVAFNVFQGIETAVGHYVHARLKGGLILKFDSGTVSKTSDWKCKVTDVLFPGQKYSSDCNVVRYSLDGNFRTEVDPDLSAFYVKDGKYFTSEPPVTYSPATILAGSVYTNSCLVSSDGQPGGDAISLSFNNLLGFDSSKPVTKKYTYSFLPKEDGDVLLAEFDTYDPIYKNGAMYKGKPILWVNKASYDTNLNKFNRASLRQIFDVAPIELENKFTPLSVESTPVEPPTVDVVALQQEMTIVKCKGLNKPFVKDNVSFVADDSGTPVVEYLSKEDLHTLYVDPKYQVIVLKDNVLSSMLRLHTVESGDINVVAASGSLTRKVKLLFRASFYFKEFATRTFTATTAVGSCIKSVVRHLGVTKGILTGCFSFVKMLFMLPLAYFSDSKLGTTEVKVSALKTAGVVTGNVVKQCCTAAVDLSMDKLRRVDWKSTLRLLLMLCTTMVLLSSVYHLYVFNQVLSSDVMFEDAQGLKKFYKEVRAYLGISSACDGLASAYRANSFDVPTFCANRSAMCNWCLISQDSITHYPALKMVQTHLSHYVLNIDWLWFAFETGLAYMLYTSAFNWLLLAGTLHYFFAQTSIFVDWRSYNYAVSSAFWLFTHIPMAGLVRMYNLLACLWLLRKFYQHVINGCKDTACLLCYKRNRLTRVEASTVVCGGKRTFYITANGGISFCRRHNWNCVDCDTAGVGNTFICEEVANDLTTALRRPINATDRSHYYVDSVTVKETVVQFNYRRDGQPFYERFPLCAFTNLDKLKFKEVCKTTTGIPEYNFIIYDSSDRGQESLARSACVYYSQVLCKSILLVDSSLVTSVGDSSEIATKMFDSFVNSFVSLYNVTRDKLEKLISTARDGVRRGDNFHSVLTTFIDAARGPAGVESDVETNEIVDSVQYAHKHDIQITNESYNNYVPSYVKPDSVSTSDLGSLIDCNAASVNQIVLRNSNGACIWNAAAYMKLSDALKRQIRIACRKCNLAFRLTTSKLRANDNILSVRFTANKIVGGAPTWFNALRDFTLKGYVLATIIVFLCAVLMYLCLPTFSMVPVEFYEDRILDFKVLDNGIIRDVNPDDKCFANKHRSFTQWYHEHVGGVYDNSITCPLTVAVIAGVAGARIPDVPTTLAWVNNQIIFFVSRVFANTGSVCYTPIDEIPYKSFSDSGCILPSECTMFRDAEGRMTPYCHDPTVLPGAFAYSQMRPHVRYDLYDGNMFIKFPEVVFESTLRITRTLSTQYCRFGSCEYAQEGVCITTNGSWAIFNDHHLNRPGVYCGSDFIDIVRRLAVSLFQPITYFQLTTSLVLGIGLCAFLTLLFYYINKVKRAFADYTQCAVIAVVAAVLNSLCICFVASIPLCIVPYTALYYYATFYFTNEPAFIMHVSWYIMFGPIVPIWMTCVYTVAMCFRHFFWVLAYFSKKHVEVFTDGKLNCSFQDAASNIFVINKDTYAALRNSLTNDAYSRFLGLFNKYKYFSGAMETAAYREAAACHLAKALQTYSETGSDLLYQPPNCSITSGVLQSGLVKMSHPSGDVEACMVQVTCGSMTLNGLWLDNTVWCPRHVMCPADQLSDPNYDALLISMTNHSFSVQKHIGAPANLRVVGHAMQGTLLKLTVDVANPSTPAYTFTTVKPGAAFSVLACYNGRPTGTFTVVMRPNYTIKGSFLCGSCGSVGYTKEGSVINFCYMHQMELANGTHTGSAFDGTMYGAFMDKQVHQVQLTDKYCSVNVVAWLYAAILNGCAWFVKPNRTSVVSFNEWALANQFTEFVGTQSVDMLAVKTGVAIEQLLYAIQQLYTGFQGKQILGSTMLEDEFTPEDVNMQIMGVVMQSGVRKVTYGTAHWLFATLVSTYVIILQATKFTLWNYLFETIPTQLFPLLFVTMAFVMLLVKHKHTFLTLFLLPVAICLTYANIVYEPTTPISSALIAVANWLAPTNAYMRTTHTDIGVYISMSLVLVIVVKRLYNPSLSNFALALCSGVMWLYTYSIGEASSPIAYLVFVTTLTSDYTITVFVTVNLAKVCTYAIFAYSPQLTLVFPEVKMILLLYTCLGFMCTCYFGVFSLLNLKLRAPMGVYDFKVSTQEFRFMTANNLTAPRNSWEAMALNFKLIGIGGTPCIKVAAMQSKLTDLKCTSVVLLSVLQQLHLEANSRAWAFCVKCHNDILAATDPSEAFEKFVSLFATLMTFSGNVDLDALASDIFDTPSVLQATLSEFSHLATFAELEAAQKAYQEAMDSGDTSPQVLKALQKAVNIAKNAYEKDKAVARKLERMADQAMTSMYKQARAEDKKAKIVSAMQTMLFGMIKKLDNDVLNGIISNARNGCIPLSVIPLCASNKLRVVIPDFTVWNQVVTYPSLNYAGALWDITVINNVDNEIVKSSDVVDSNENLTWPLVLECTRASTSAVKLQNNEIKPSGLKTMVVSAGQEQTNCNTSSLAYYEPVQGRKMLMALLSDNAYLKWARVEGKDGFVSVELQPPCKFLIAGPKGPEIRYLYFVKNLNNLHRGQVLGHIAATVRLQAGSNTEFASNSSVLSLVNFTVDPQKAYLDFVNAGGAPLTNCVKMLTPKTGTGIAISVKPESTADQETYGGASVCLYCRAHIEHPDVSGVCKYKGKFVQIPAQCVRDPVGFCLSNTPCNVCQYWIGYGCNCDSLRQAALPQSKDSNFLNESGVLL</sequence>
<protein>
    <recommendedName>
        <fullName>Replicase polyprotein 1a</fullName>
        <shortName>pp1a</shortName>
    </recommendedName>
    <alternativeName>
        <fullName>ORF1a polyprotein</fullName>
    </alternativeName>
    <component>
        <recommendedName>
            <fullName>Host translation inhibitor nsp1</fullName>
            <shortName>nsp1</shortName>
        </recommendedName>
        <alternativeName>
            <fullName>Leader protein</fullName>
        </alternativeName>
    </component>
    <component>
        <recommendedName>
            <fullName>Non-structural protein 2</fullName>
            <shortName>nsp2</shortName>
        </recommendedName>
        <alternativeName>
            <fullName>p65 homolog</fullName>
        </alternativeName>
    </component>
    <component>
        <recommendedName>
            <fullName>Papain-like protease nsp3</fullName>
            <shortName>PL-PRO</shortName>
            <ecNumber>3.4.19.12</ecNumber>
            <ecNumber>3.4.22.-</ecNumber>
        </recommendedName>
        <alternativeName>
            <fullName>Non-structural protein 3</fullName>
            <shortName>nsp3</shortName>
        </alternativeName>
        <alternativeName>
            <fullName>PL2-PRO</fullName>
        </alternativeName>
    </component>
    <component>
        <recommendedName>
            <fullName>Non-structural protein 4</fullName>
            <shortName>nsp4</shortName>
        </recommendedName>
    </component>
    <component>
        <recommendedName>
            <fullName>3C-like proteinase nsp5</fullName>
            <shortName>3CL-PRO</shortName>
            <shortName>3CLp</shortName>
            <ecNumber>3.4.22.69</ecNumber>
        </recommendedName>
        <alternativeName>
            <fullName>nsp5</fullName>
        </alternativeName>
    </component>
    <component>
        <recommendedName>
            <fullName>Non-structural protein 6</fullName>
            <shortName>nsp6</shortName>
        </recommendedName>
    </component>
    <component>
        <recommendedName>
            <fullName>Non-structural protein 7</fullName>
            <shortName>nsp7</shortName>
        </recommendedName>
    </component>
    <component>
        <recommendedName>
            <fullName>Non-structural protein 8</fullName>
            <shortName>nsp8</shortName>
        </recommendedName>
    </component>
    <component>
        <recommendedName>
            <fullName>RNA-capping enzyme subunit nsp9</fullName>
        </recommendedName>
        <alternativeName>
            <fullName>Non-structural protein 9</fullName>
            <shortName>nsp9</shortName>
            <ecNumber>2.7.7.50</ecNumber>
        </alternativeName>
    </component>
    <component>
        <recommendedName>
            <fullName>Non-structural protein 10</fullName>
            <shortName>nsp10</shortName>
        </recommendedName>
        <alternativeName>
            <fullName>Growth factor-like peptide</fullName>
            <shortName>GFL</shortName>
        </alternativeName>
    </component>
    <component>
        <recommendedName>
            <fullName>Non-structural protein 11</fullName>
            <shortName>nsp11</shortName>
        </recommendedName>
    </component>
</protein>
<organism>
    <name type="scientific">Middle East respiratory syndrome-related coronavirus (isolate United Kingdom/H123990006/2012)</name>
    <name type="common">MERS-CoV</name>
    <name type="synonym">Betacoronavirus England 1</name>
    <dbReference type="NCBI Taxonomy" id="1263720"/>
    <lineage>
        <taxon>Viruses</taxon>
        <taxon>Riboviria</taxon>
        <taxon>Orthornavirae</taxon>
        <taxon>Pisuviricota</taxon>
        <taxon>Pisoniviricetes</taxon>
        <taxon>Nidovirales</taxon>
        <taxon>Cornidovirineae</taxon>
        <taxon>Coronaviridae</taxon>
        <taxon>Orthocoronavirinae</taxon>
        <taxon>Betacoronavirus</taxon>
        <taxon>Merbecovirus</taxon>
        <taxon>Middle East respiratory syndrome-related coronavirus</taxon>
    </lineage>
</organism>
<dbReference type="EC" id="3.4.19.12"/>
<dbReference type="EC" id="3.4.22.-"/>
<dbReference type="EC" id="3.4.22.69"/>
<dbReference type="EC" id="2.7.7.50"/>
<dbReference type="EMBL" id="KC164505">
    <property type="protein sequence ID" value="AFY13305.1"/>
    <property type="molecule type" value="Genomic_RNA"/>
</dbReference>
<dbReference type="PDB" id="4R3D">
    <property type="method" value="X-ray"/>
    <property type="resolution" value="2.82 A"/>
    <property type="chains" value="A/B=1481-1811"/>
</dbReference>
<dbReference type="PDB" id="5DUS">
    <property type="method" value="X-ray"/>
    <property type="resolution" value="1.43 A"/>
    <property type="chains" value="A=1110-1273"/>
</dbReference>
<dbReference type="PDB" id="5HIH">
    <property type="method" value="X-ray"/>
    <property type="resolution" value="1.66 A"/>
    <property type="chains" value="A=1109-1275"/>
</dbReference>
<dbReference type="PDB" id="5WKJ">
    <property type="method" value="X-ray"/>
    <property type="resolution" value="2.05 A"/>
    <property type="chains" value="A=3248-3553"/>
</dbReference>
<dbReference type="PDB" id="5WKK">
    <property type="method" value="X-ray"/>
    <property type="resolution" value="1.55 A"/>
    <property type="chains" value="A=3248-3553"/>
</dbReference>
<dbReference type="PDB" id="5WKL">
    <property type="method" value="X-ray"/>
    <property type="resolution" value="1.85 A"/>
    <property type="chains" value="A=3248-3553"/>
</dbReference>
<dbReference type="PDB" id="5WKM">
    <property type="method" value="X-ray"/>
    <property type="resolution" value="2.25 A"/>
    <property type="chains" value="A=3248-3553"/>
</dbReference>
<dbReference type="PDB" id="7T3Y">
    <property type="method" value="X-ray"/>
    <property type="resolution" value="1.90 A"/>
    <property type="chains" value="A/B=3248-3553"/>
</dbReference>
<dbReference type="PDB" id="7T3Z">
    <property type="method" value="X-ray"/>
    <property type="resolution" value="1.95 A"/>
    <property type="chains" value="A/B=3248-3553"/>
</dbReference>
<dbReference type="PDB" id="7T40">
    <property type="method" value="X-ray"/>
    <property type="resolution" value="1.70 A"/>
    <property type="chains" value="A=3248-3553"/>
</dbReference>
<dbReference type="PDB" id="7T41">
    <property type="method" value="X-ray"/>
    <property type="resolution" value="2.10 A"/>
    <property type="chains" value="A=3248-3553"/>
</dbReference>
<dbReference type="PDB" id="8R5J">
    <property type="method" value="X-ray"/>
    <property type="resolution" value="1.90 A"/>
    <property type="chains" value="A/B=3248-3553"/>
</dbReference>
<dbReference type="PDB" id="9ATA">
    <property type="method" value="X-ray"/>
    <property type="resolution" value="1.65 A"/>
    <property type="chains" value="A/B=3248-3553"/>
</dbReference>
<dbReference type="PDB" id="9ATD">
    <property type="method" value="X-ray"/>
    <property type="resolution" value="1.80 A"/>
    <property type="chains" value="A=3248-3553"/>
</dbReference>
<dbReference type="PDB" id="9ATE">
    <property type="method" value="X-ray"/>
    <property type="resolution" value="1.85 A"/>
    <property type="chains" value="A/B=3248-3553"/>
</dbReference>
<dbReference type="PDB" id="9ATF">
    <property type="method" value="X-ray"/>
    <property type="resolution" value="1.50 A"/>
    <property type="chains" value="A=3248-3553"/>
</dbReference>
<dbReference type="PDB" id="9ATG">
    <property type="method" value="X-ray"/>
    <property type="resolution" value="1.75 A"/>
    <property type="chains" value="A=3248-3553"/>
</dbReference>
<dbReference type="PDB" id="9ATH">
    <property type="method" value="X-ray"/>
    <property type="resolution" value="1.65 A"/>
    <property type="chains" value="A/B=3248-3553"/>
</dbReference>
<dbReference type="PDB" id="9ATI">
    <property type="method" value="X-ray"/>
    <property type="resolution" value="1.60 A"/>
    <property type="chains" value="A=3248-3553"/>
</dbReference>
<dbReference type="PDB" id="9ATJ">
    <property type="method" value="X-ray"/>
    <property type="resolution" value="1.40 A"/>
    <property type="chains" value="A=3248-3553"/>
</dbReference>
<dbReference type="PDB" id="9ATS">
    <property type="method" value="X-ray"/>
    <property type="resolution" value="2.50 A"/>
    <property type="chains" value="A=3248-3553"/>
</dbReference>
<dbReference type="PDB" id="9ATT">
    <property type="method" value="X-ray"/>
    <property type="resolution" value="1.70 A"/>
    <property type="chains" value="A/B=3248-3553"/>
</dbReference>
<dbReference type="PDB" id="9BOO">
    <property type="method" value="X-ray"/>
    <property type="resolution" value="1.50 A"/>
    <property type="chains" value="A=3248-3553"/>
</dbReference>
<dbReference type="PDBsum" id="4R3D"/>
<dbReference type="PDBsum" id="5DUS"/>
<dbReference type="PDBsum" id="5HIH"/>
<dbReference type="PDBsum" id="5WKJ"/>
<dbReference type="PDBsum" id="5WKK"/>
<dbReference type="PDBsum" id="5WKL"/>
<dbReference type="PDBsum" id="5WKM"/>
<dbReference type="PDBsum" id="7T3Y"/>
<dbReference type="PDBsum" id="7T3Z"/>
<dbReference type="PDBsum" id="7T40"/>
<dbReference type="PDBsum" id="7T41"/>
<dbReference type="PDBsum" id="8R5J"/>
<dbReference type="PDBsum" id="9ATA"/>
<dbReference type="PDBsum" id="9ATD"/>
<dbReference type="PDBsum" id="9ATE"/>
<dbReference type="PDBsum" id="9ATF"/>
<dbReference type="PDBsum" id="9ATG"/>
<dbReference type="PDBsum" id="9ATH"/>
<dbReference type="PDBsum" id="9ATI"/>
<dbReference type="PDBsum" id="9ATJ"/>
<dbReference type="PDBsum" id="9ATS"/>
<dbReference type="PDBsum" id="9ATT"/>
<dbReference type="PDBsum" id="9BOO"/>
<dbReference type="SMR" id="K9N638"/>
<dbReference type="BioGRID" id="4383912">
    <property type="interactions" value="1"/>
</dbReference>
<dbReference type="IntAct" id="K9N638">
    <property type="interactions" value="9"/>
</dbReference>
<dbReference type="BindingDB" id="K9N638"/>
<dbReference type="DrugBank" id="DB15797">
    <property type="generic name" value="GC-373"/>
</dbReference>
<dbReference type="DrugBank" id="DB15796">
    <property type="generic name" value="GC-376 free acid"/>
</dbReference>
<dbReference type="SABIO-RK" id="K9N638"/>
<dbReference type="EvolutionaryTrace" id="K9N638"/>
<dbReference type="Proteomes" id="UP000139997">
    <property type="component" value="Genome"/>
</dbReference>
<dbReference type="GO" id="GO:0033644">
    <property type="term" value="C:host cell membrane"/>
    <property type="evidence" value="ECO:0007669"/>
    <property type="project" value="UniProtKB-SubCell"/>
</dbReference>
<dbReference type="GO" id="GO:0044220">
    <property type="term" value="C:host cell perinuclear region of cytoplasm"/>
    <property type="evidence" value="ECO:0007669"/>
    <property type="project" value="UniProtKB-SubCell"/>
</dbReference>
<dbReference type="GO" id="GO:0016020">
    <property type="term" value="C:membrane"/>
    <property type="evidence" value="ECO:0007669"/>
    <property type="project" value="UniProtKB-KW"/>
</dbReference>
<dbReference type="GO" id="GO:0004843">
    <property type="term" value="F:cysteine-type deubiquitinase activity"/>
    <property type="evidence" value="ECO:0007669"/>
    <property type="project" value="UniProtKB-EC"/>
</dbReference>
<dbReference type="GO" id="GO:0004197">
    <property type="term" value="F:cysteine-type endopeptidase activity"/>
    <property type="evidence" value="ECO:0007669"/>
    <property type="project" value="InterPro"/>
</dbReference>
<dbReference type="GO" id="GO:0004519">
    <property type="term" value="F:endonuclease activity"/>
    <property type="evidence" value="ECO:0007669"/>
    <property type="project" value="UniProtKB-KW"/>
</dbReference>
<dbReference type="GO" id="GO:0002151">
    <property type="term" value="F:G-quadruplex RNA binding"/>
    <property type="evidence" value="ECO:0007669"/>
    <property type="project" value="InterPro"/>
</dbReference>
<dbReference type="GO" id="GO:0008168">
    <property type="term" value="F:methyltransferase activity"/>
    <property type="evidence" value="ECO:0007669"/>
    <property type="project" value="UniProtKB-KW"/>
</dbReference>
<dbReference type="GO" id="GO:0008242">
    <property type="term" value="F:omega peptidase activity"/>
    <property type="evidence" value="ECO:0007669"/>
    <property type="project" value="InterPro"/>
</dbReference>
<dbReference type="GO" id="GO:0003727">
    <property type="term" value="F:single-stranded RNA binding"/>
    <property type="evidence" value="ECO:0007669"/>
    <property type="project" value="InterPro"/>
</dbReference>
<dbReference type="GO" id="GO:0008270">
    <property type="term" value="F:zinc ion binding"/>
    <property type="evidence" value="ECO:0007669"/>
    <property type="project" value="UniProtKB-KW"/>
</dbReference>
<dbReference type="GO" id="GO:0032259">
    <property type="term" value="P:methylation"/>
    <property type="evidence" value="ECO:0007669"/>
    <property type="project" value="UniProtKB-KW"/>
</dbReference>
<dbReference type="GO" id="GO:0006508">
    <property type="term" value="P:proteolysis"/>
    <property type="evidence" value="ECO:0007669"/>
    <property type="project" value="UniProtKB-KW"/>
</dbReference>
<dbReference type="GO" id="GO:0010506">
    <property type="term" value="P:regulation of autophagy"/>
    <property type="evidence" value="ECO:0007669"/>
    <property type="project" value="InterPro"/>
</dbReference>
<dbReference type="GO" id="GO:0039520">
    <property type="term" value="P:symbiont-mediated activation of host autophagy"/>
    <property type="evidence" value="ECO:0007669"/>
    <property type="project" value="UniProtKB-KW"/>
</dbReference>
<dbReference type="GO" id="GO:0039595">
    <property type="term" value="P:symbiont-mediated degradation of host mRNA"/>
    <property type="evidence" value="ECO:0007669"/>
    <property type="project" value="UniProtKB-KW"/>
</dbReference>
<dbReference type="GO" id="GO:0039648">
    <property type="term" value="P:symbiont-mediated perturbation of host ubiquitin-like protein modification"/>
    <property type="evidence" value="ECO:0007669"/>
    <property type="project" value="UniProtKB-KW"/>
</dbReference>
<dbReference type="GO" id="GO:0039548">
    <property type="term" value="P:symbiont-mediated suppression of host cytoplasmic pattern recognition receptor signaling pathway via inhibition of IRF3 activity"/>
    <property type="evidence" value="ECO:0007669"/>
    <property type="project" value="UniProtKB-KW"/>
</dbReference>
<dbReference type="GO" id="GO:0039657">
    <property type="term" value="P:symbiont-mediated suppression of host gene expression"/>
    <property type="evidence" value="ECO:0007669"/>
    <property type="project" value="UniProtKB-KW"/>
</dbReference>
<dbReference type="GO" id="GO:0039579">
    <property type="term" value="P:symbiont-mediated suppression of host ISG15-protein conjugation"/>
    <property type="evidence" value="ECO:0007669"/>
    <property type="project" value="UniProtKB-KW"/>
</dbReference>
<dbReference type="GO" id="GO:0039502">
    <property type="term" value="P:symbiont-mediated suppression of host type I interferon-mediated signaling pathway"/>
    <property type="evidence" value="ECO:0007669"/>
    <property type="project" value="UniProtKB-KW"/>
</dbReference>
<dbReference type="GO" id="GO:0019079">
    <property type="term" value="P:viral genome replication"/>
    <property type="evidence" value="ECO:0007669"/>
    <property type="project" value="InterPro"/>
</dbReference>
<dbReference type="GO" id="GO:0019082">
    <property type="term" value="P:viral protein processing"/>
    <property type="evidence" value="ECO:0007669"/>
    <property type="project" value="InterPro"/>
</dbReference>
<dbReference type="GO" id="GO:0075523">
    <property type="term" value="P:viral translational frameshifting"/>
    <property type="evidence" value="ECO:0007669"/>
    <property type="project" value="UniProtKB-KW"/>
</dbReference>
<dbReference type="CDD" id="cd21901">
    <property type="entry name" value="alpha_betaCoV_Nsp10"/>
    <property type="match status" value="1"/>
</dbReference>
<dbReference type="CDD" id="cd21560">
    <property type="entry name" value="betaCoV-Nsp6"/>
    <property type="match status" value="1"/>
</dbReference>
<dbReference type="CDD" id="cd21517">
    <property type="entry name" value="betaCoV_Nsp2_MERS-like"/>
    <property type="match status" value="1"/>
</dbReference>
<dbReference type="CDD" id="cd21666">
    <property type="entry name" value="betaCoV_Nsp5_Mpro"/>
    <property type="match status" value="1"/>
</dbReference>
<dbReference type="CDD" id="cd21827">
    <property type="entry name" value="betaCoV_Nsp7"/>
    <property type="match status" value="1"/>
</dbReference>
<dbReference type="CDD" id="cd21831">
    <property type="entry name" value="betaCoV_Nsp8"/>
    <property type="match status" value="1"/>
</dbReference>
<dbReference type="CDD" id="cd21898">
    <property type="entry name" value="betaCoV_Nsp9"/>
    <property type="match status" value="1"/>
</dbReference>
<dbReference type="CDD" id="cd21732">
    <property type="entry name" value="betaCoV_PLPro"/>
    <property type="match status" value="1"/>
</dbReference>
<dbReference type="CDD" id="cd21473">
    <property type="entry name" value="cv_Nsp4_TM"/>
    <property type="match status" value="1"/>
</dbReference>
<dbReference type="CDD" id="cd21563">
    <property type="entry name" value="Macro_cv_SUD-M_Nsp3-like"/>
    <property type="match status" value="1"/>
</dbReference>
<dbReference type="CDD" id="cd21557">
    <property type="entry name" value="Macro_X_Nsp3-like"/>
    <property type="match status" value="1"/>
</dbReference>
<dbReference type="CDD" id="cd21878">
    <property type="entry name" value="MERS-CoV-like_Nsp1"/>
    <property type="match status" value="1"/>
</dbReference>
<dbReference type="CDD" id="cd21815">
    <property type="entry name" value="MERS-CoV-like_Nsp3_betaSM"/>
    <property type="match status" value="1"/>
</dbReference>
<dbReference type="CDD" id="cd21823">
    <property type="entry name" value="MERS-CoV-like_Nsp3_NAB"/>
    <property type="match status" value="1"/>
</dbReference>
<dbReference type="CDD" id="cd21523">
    <property type="entry name" value="SUD_C_MERS-CoV_Nsp3"/>
    <property type="match status" value="1"/>
</dbReference>
<dbReference type="CDD" id="cd21716">
    <property type="entry name" value="TM_Y_MERS-CoV-like_Nsp3_C"/>
    <property type="match status" value="1"/>
</dbReference>
<dbReference type="CDD" id="cd21467">
    <property type="entry name" value="Ubl1_cv_Nsp3_N-like"/>
    <property type="match status" value="1"/>
</dbReference>
<dbReference type="FunFam" id="3.40.220.10:FF:000017">
    <property type="entry name" value="ORF1a polyprotein"/>
    <property type="match status" value="1"/>
</dbReference>
<dbReference type="FunFam" id="3.40.50.11020:FF:000002">
    <property type="entry name" value="ORF1a polyprotein"/>
    <property type="match status" value="1"/>
</dbReference>
<dbReference type="FunFam" id="1.10.8.370:FF:000001">
    <property type="entry name" value="Orf1a polyprotein"/>
    <property type="match status" value="1"/>
</dbReference>
<dbReference type="FunFam" id="2.40.10.250:FF:000001">
    <property type="entry name" value="Orf1a polyprotein"/>
    <property type="match status" value="1"/>
</dbReference>
<dbReference type="FunFam" id="1.10.8.1190:FF:000002">
    <property type="entry name" value="ORF1ab polyprotein"/>
    <property type="match status" value="1"/>
</dbReference>
<dbReference type="FunFam" id="1.10.150.420:FF:000001">
    <property type="entry name" value="Replicase polyprotein"/>
    <property type="match status" value="1"/>
</dbReference>
<dbReference type="FunFam" id="2.40.10.10:FF:000045">
    <property type="entry name" value="Replicase polyprotein 1a"/>
    <property type="match status" value="1"/>
</dbReference>
<dbReference type="Gene3D" id="1.10.8.1190">
    <property type="match status" value="1"/>
</dbReference>
<dbReference type="Gene3D" id="2.60.120.1680">
    <property type="match status" value="1"/>
</dbReference>
<dbReference type="Gene3D" id="3.10.20.350">
    <property type="match status" value="1"/>
</dbReference>
<dbReference type="Gene3D" id="3.10.20.540">
    <property type="match status" value="1"/>
</dbReference>
<dbReference type="Gene3D" id="6.10.140.2090">
    <property type="match status" value="1"/>
</dbReference>
<dbReference type="Gene3D" id="1.10.150.420">
    <property type="entry name" value="Coronavirus nonstructural protein 4 C-terminus"/>
    <property type="match status" value="1"/>
</dbReference>
<dbReference type="Gene3D" id="3.40.220.10">
    <property type="entry name" value="Leucine Aminopeptidase, subunit E, domain 1"/>
    <property type="match status" value="1"/>
</dbReference>
<dbReference type="Gene3D" id="1.10.1840.10">
    <property type="entry name" value="main proteinase (3clpro) structure, domain 3"/>
    <property type="match status" value="1"/>
</dbReference>
<dbReference type="Gene3D" id="3.40.220.20">
    <property type="entry name" value="Nsp3, SUD-M subdomain"/>
    <property type="match status" value="1"/>
</dbReference>
<dbReference type="Gene3D" id="1.10.8.370">
    <property type="entry name" value="nsp7 replicase"/>
    <property type="match status" value="1"/>
</dbReference>
<dbReference type="Gene3D" id="3.30.70.3540">
    <property type="entry name" value="Nsp8 replicase, head domain"/>
    <property type="match status" value="1"/>
</dbReference>
<dbReference type="Gene3D" id="2.40.10.250">
    <property type="entry name" value="Replicase NSP9"/>
    <property type="match status" value="1"/>
</dbReference>
<dbReference type="Gene3D" id="3.40.50.11020">
    <property type="entry name" value="Replicase polyprotein, nucleic acid-binding domain"/>
    <property type="match status" value="1"/>
</dbReference>
<dbReference type="Gene3D" id="2.40.10.10">
    <property type="entry name" value="Trypsin-like serine proteases"/>
    <property type="match status" value="2"/>
</dbReference>
<dbReference type="InterPro" id="IPR046443">
    <property type="entry name" value="a/bCoV_NSP1_glob"/>
</dbReference>
<dbReference type="InterPro" id="IPR046442">
    <property type="entry name" value="bCoV_NSP1_C"/>
</dbReference>
<dbReference type="InterPro" id="IPR043613">
    <property type="entry name" value="CoV_NSP2_C"/>
</dbReference>
<dbReference type="InterPro" id="IPR047573">
    <property type="entry name" value="CoV_NSP2_M"/>
</dbReference>
<dbReference type="InterPro" id="IPR049894">
    <property type="entry name" value="COV_NSP3_3ECTO"/>
</dbReference>
<dbReference type="InterPro" id="IPR043611">
    <property type="entry name" value="CoV_NSP3_C"/>
</dbReference>
<dbReference type="InterPro" id="IPR047566">
    <property type="entry name" value="CoV_NSP3_Y"/>
</dbReference>
<dbReference type="InterPro" id="IPR032505">
    <property type="entry name" value="CoV_NSP4_C"/>
</dbReference>
<dbReference type="InterPro" id="IPR043612">
    <property type="entry name" value="CoV_NSP4_N"/>
</dbReference>
<dbReference type="InterPro" id="IPR022733">
    <property type="entry name" value="DPUP_SUD_C_bCoV"/>
</dbReference>
<dbReference type="InterPro" id="IPR002589">
    <property type="entry name" value="Macro_dom"/>
</dbReference>
<dbReference type="InterPro" id="IPR043472">
    <property type="entry name" value="Macro_dom-like"/>
</dbReference>
<dbReference type="InterPro" id="IPR044371">
    <property type="entry name" value="Macro_X_NSP3-like"/>
</dbReference>
<dbReference type="InterPro" id="IPR036333">
    <property type="entry name" value="NSP10_sf_CoV"/>
</dbReference>
<dbReference type="InterPro" id="IPR021590">
    <property type="entry name" value="NSP1_glob_bCoV"/>
</dbReference>
<dbReference type="InterPro" id="IPR044388">
    <property type="entry name" value="NSP2_MERS-like"/>
</dbReference>
<dbReference type="InterPro" id="IPR043615">
    <property type="entry name" value="NSP2_N_CoV"/>
</dbReference>
<dbReference type="InterPro" id="IPR024375">
    <property type="entry name" value="NSP3_bCoV"/>
</dbReference>
<dbReference type="InterPro" id="IPR047567">
    <property type="entry name" value="NSP3_G2M_bCoV"/>
</dbReference>
<dbReference type="InterPro" id="IPR032592">
    <property type="entry name" value="NSP3_NAB_bCoV"/>
</dbReference>
<dbReference type="InterPro" id="IPR042570">
    <property type="entry name" value="NSP3_NAB_bCoV_sf"/>
</dbReference>
<dbReference type="InterPro" id="IPR038400">
    <property type="entry name" value="NSP3_SUD-M_sf_bCoV"/>
</dbReference>
<dbReference type="InterPro" id="IPR044382">
    <property type="entry name" value="NSP3_SUD_C_MERS-CoV"/>
</dbReference>
<dbReference type="InterPro" id="IPR044357">
    <property type="entry name" value="NSP3_Ubl1_dom_CoV"/>
</dbReference>
<dbReference type="InterPro" id="IPR044353">
    <property type="entry name" value="Nsp3_Ubl2_dom_CoV"/>
</dbReference>
<dbReference type="InterPro" id="IPR038083">
    <property type="entry name" value="NSP3A-like"/>
</dbReference>
<dbReference type="InterPro" id="IPR038123">
    <property type="entry name" value="NSP4_C_sf_CoV"/>
</dbReference>
<dbReference type="InterPro" id="IPR044367">
    <property type="entry name" value="NSP6_betaCoV"/>
</dbReference>
<dbReference type="InterPro" id="IPR043610">
    <property type="entry name" value="NSP6_CoV"/>
</dbReference>
<dbReference type="InterPro" id="IPR014828">
    <property type="entry name" value="NSP7_CoV"/>
</dbReference>
<dbReference type="InterPro" id="IPR037204">
    <property type="entry name" value="NSP7_sf_CoV"/>
</dbReference>
<dbReference type="InterPro" id="IPR014829">
    <property type="entry name" value="NSP8_CoV"/>
</dbReference>
<dbReference type="InterPro" id="IPR037230">
    <property type="entry name" value="NSP8_sf_CoV"/>
</dbReference>
<dbReference type="InterPro" id="IPR014822">
    <property type="entry name" value="NSP9_CoV"/>
</dbReference>
<dbReference type="InterPro" id="IPR036499">
    <property type="entry name" value="NSP9_sf_CoV"/>
</dbReference>
<dbReference type="InterPro" id="IPR013016">
    <property type="entry name" value="Peptidase_C16_CoV"/>
</dbReference>
<dbReference type="InterPro" id="IPR008740">
    <property type="entry name" value="Peptidase_C30_CoV"/>
</dbReference>
<dbReference type="InterPro" id="IPR043477">
    <property type="entry name" value="Peptidase_C30_dom3_CoV"/>
</dbReference>
<dbReference type="InterPro" id="IPR009003">
    <property type="entry name" value="Peptidase_S1_PA"/>
</dbReference>
<dbReference type="InterPro" id="IPR043504">
    <property type="entry name" value="Peptidase_S1_PA_chymotrypsin"/>
</dbReference>
<dbReference type="InterPro" id="IPR043177">
    <property type="entry name" value="PLpro_N_sf_CoV"/>
</dbReference>
<dbReference type="InterPro" id="IPR043503">
    <property type="entry name" value="PLpro_palm_finger_dom_CoV"/>
</dbReference>
<dbReference type="InterPro" id="IPR043178">
    <property type="entry name" value="PLpro_thumb_sf_CoV"/>
</dbReference>
<dbReference type="InterPro" id="IPR018995">
    <property type="entry name" value="RNA_synth_NSP10_CoV"/>
</dbReference>
<dbReference type="Pfam" id="PF16251">
    <property type="entry name" value="bCoV_NAB"/>
    <property type="match status" value="1"/>
</dbReference>
<dbReference type="Pfam" id="PF11501">
    <property type="entry name" value="bCoV_NSP1"/>
    <property type="match status" value="1"/>
</dbReference>
<dbReference type="Pfam" id="PF11633">
    <property type="entry name" value="bCoV_SUD_M"/>
    <property type="match status" value="1"/>
</dbReference>
<dbReference type="Pfam" id="PF09401">
    <property type="entry name" value="CoV_NSP10"/>
    <property type="match status" value="1"/>
</dbReference>
<dbReference type="Pfam" id="PF19212">
    <property type="entry name" value="CoV_NSP2_C"/>
    <property type="match status" value="1"/>
</dbReference>
<dbReference type="Pfam" id="PF19211">
    <property type="entry name" value="CoV_NSP2_N"/>
    <property type="match status" value="1"/>
</dbReference>
<dbReference type="Pfam" id="PF19218">
    <property type="entry name" value="CoV_NSP3_C"/>
    <property type="match status" value="1"/>
</dbReference>
<dbReference type="Pfam" id="PF16348">
    <property type="entry name" value="CoV_NSP4_C"/>
    <property type="match status" value="1"/>
</dbReference>
<dbReference type="Pfam" id="PF19217">
    <property type="entry name" value="CoV_NSP4_N"/>
    <property type="match status" value="1"/>
</dbReference>
<dbReference type="Pfam" id="PF19213">
    <property type="entry name" value="CoV_NSP6"/>
    <property type="match status" value="1"/>
</dbReference>
<dbReference type="Pfam" id="PF08716">
    <property type="entry name" value="CoV_NSP7"/>
    <property type="match status" value="1"/>
</dbReference>
<dbReference type="Pfam" id="PF08717">
    <property type="entry name" value="CoV_NSP8"/>
    <property type="match status" value="1"/>
</dbReference>
<dbReference type="Pfam" id="PF08710">
    <property type="entry name" value="CoV_NSP9"/>
    <property type="match status" value="1"/>
</dbReference>
<dbReference type="Pfam" id="PF08715">
    <property type="entry name" value="CoV_peptidase"/>
    <property type="match status" value="1"/>
</dbReference>
<dbReference type="Pfam" id="PF01661">
    <property type="entry name" value="Macro"/>
    <property type="match status" value="1"/>
</dbReference>
<dbReference type="Pfam" id="PF05409">
    <property type="entry name" value="Peptidase_C30"/>
    <property type="match status" value="1"/>
</dbReference>
<dbReference type="SMART" id="SM00506">
    <property type="entry name" value="A1pp"/>
    <property type="match status" value="1"/>
</dbReference>
<dbReference type="SUPFAM" id="SSF144246">
    <property type="entry name" value="Coronavirus NSP10-like"/>
    <property type="match status" value="1"/>
</dbReference>
<dbReference type="SUPFAM" id="SSF140367">
    <property type="entry name" value="Coronavirus NSP7-like"/>
    <property type="match status" value="1"/>
</dbReference>
<dbReference type="SUPFAM" id="SSF143076">
    <property type="entry name" value="Coronavirus NSP8-like"/>
    <property type="match status" value="1"/>
</dbReference>
<dbReference type="SUPFAM" id="SSF52949">
    <property type="entry name" value="Macro domain-like"/>
    <property type="match status" value="1"/>
</dbReference>
<dbReference type="SUPFAM" id="SSF159936">
    <property type="entry name" value="NSP3A-like"/>
    <property type="match status" value="1"/>
</dbReference>
<dbReference type="SUPFAM" id="SSF101816">
    <property type="entry name" value="Replicase NSP9"/>
    <property type="match status" value="1"/>
</dbReference>
<dbReference type="SUPFAM" id="SSF50494">
    <property type="entry name" value="Trypsin-like serine proteases"/>
    <property type="match status" value="1"/>
</dbReference>
<dbReference type="PROSITE" id="PS51963">
    <property type="entry name" value="BCOV_NSP1_C"/>
    <property type="match status" value="1"/>
</dbReference>
<dbReference type="PROSITE" id="PS51942">
    <property type="entry name" value="BCOV_NSP3C_C"/>
    <property type="match status" value="1"/>
</dbReference>
<dbReference type="PROSITE" id="PS51941">
    <property type="entry name" value="BCOV_NSP3C_M"/>
    <property type="match status" value="1"/>
</dbReference>
<dbReference type="PROSITE" id="PS51994">
    <property type="entry name" value="BCOV_NSP3E_G2M"/>
    <property type="match status" value="1"/>
</dbReference>
<dbReference type="PROSITE" id="PS51945">
    <property type="entry name" value="BCOV_NSP3E_NAB"/>
    <property type="match status" value="1"/>
</dbReference>
<dbReference type="PROSITE" id="PS51993">
    <property type="entry name" value="COV_3ECTO"/>
    <property type="match status" value="1"/>
</dbReference>
<dbReference type="PROSITE" id="PS51952">
    <property type="entry name" value="COV_EXON_MTASE_COACT"/>
    <property type="match status" value="1"/>
</dbReference>
<dbReference type="PROSITE" id="PS51962">
    <property type="entry name" value="COV_NSP1"/>
    <property type="match status" value="1"/>
</dbReference>
<dbReference type="PROSITE" id="PS51991">
    <property type="entry name" value="COV_NSP2_C"/>
    <property type="match status" value="1"/>
</dbReference>
<dbReference type="PROSITE" id="PS51990">
    <property type="entry name" value="COV_NSP2_M"/>
    <property type="match status" value="1"/>
</dbReference>
<dbReference type="PROSITE" id="PS51989">
    <property type="entry name" value="COV_NSP2_N"/>
    <property type="match status" value="1"/>
</dbReference>
<dbReference type="PROSITE" id="PS51992">
    <property type="entry name" value="COV_NSP3_Y"/>
    <property type="match status" value="1"/>
</dbReference>
<dbReference type="PROSITE" id="PS51943">
    <property type="entry name" value="COV_NSP3A_UBL"/>
    <property type="match status" value="1"/>
</dbReference>
<dbReference type="PROSITE" id="PS51944">
    <property type="entry name" value="COV_NSP3D_UBL"/>
    <property type="match status" value="1"/>
</dbReference>
<dbReference type="PROSITE" id="PS51946">
    <property type="entry name" value="COV_NSP4C"/>
    <property type="match status" value="1"/>
</dbReference>
<dbReference type="PROSITE" id="PS51949">
    <property type="entry name" value="COV_NSP7"/>
    <property type="match status" value="1"/>
</dbReference>
<dbReference type="PROSITE" id="PS51950">
    <property type="entry name" value="COV_NSP8"/>
    <property type="match status" value="1"/>
</dbReference>
<dbReference type="PROSITE" id="PS51951">
    <property type="entry name" value="COV_NSP9_SSRNA_BD"/>
    <property type="match status" value="1"/>
</dbReference>
<dbReference type="PROSITE" id="PS51442">
    <property type="entry name" value="M_PRO"/>
    <property type="match status" value="1"/>
</dbReference>
<dbReference type="PROSITE" id="PS51154">
    <property type="entry name" value="MACRO"/>
    <property type="match status" value="1"/>
</dbReference>
<dbReference type="PROSITE" id="PS51124">
    <property type="entry name" value="PEPTIDASE_C16"/>
    <property type="match status" value="1"/>
</dbReference>
<accession>K9N638</accession>
<proteinExistence type="evidence at protein level"/>
<keyword id="KW-0002">3D-structure</keyword>
<keyword id="KW-1072">Activation of host autophagy by virus</keyword>
<keyword id="KW-1132">Decay of host mRNAs by virus</keyword>
<keyword id="KW-1015">Disulfide bond</keyword>
<keyword id="KW-0255">Endonuclease</keyword>
<keyword id="KW-1262">Eukaryotic host gene expression shutoff by virus</keyword>
<keyword id="KW-1193">Eukaryotic host translation shutoff by virus</keyword>
<keyword id="KW-1035">Host cytoplasm</keyword>
<keyword id="KW-1190">Host gene expression shutoff by virus</keyword>
<keyword id="KW-1043">Host membrane</keyword>
<keyword id="KW-1192">Host mRNA suppression by virus</keyword>
<keyword id="KW-0945">Host-virus interaction</keyword>
<keyword id="KW-0378">Hydrolase</keyword>
<keyword id="KW-1090">Inhibition of host innate immune response by virus</keyword>
<keyword id="KW-1114">Inhibition of host interferon signaling pathway by virus</keyword>
<keyword id="KW-1092">Inhibition of host IRF3 by virus</keyword>
<keyword id="KW-1095">Inhibition of host ISG15 by virus</keyword>
<keyword id="KW-1113">Inhibition of host RLR pathway by virus</keyword>
<keyword id="KW-0922">Interferon antiviral system evasion</keyword>
<keyword id="KW-0472">Membrane</keyword>
<keyword id="KW-0479">Metal-binding</keyword>
<keyword id="KW-0489">Methyltransferase</keyword>
<keyword id="KW-1127">Modulation of host ubiquitin pathway by viral deubiquitinase</keyword>
<keyword id="KW-1130">Modulation of host ubiquitin pathway by virus</keyword>
<keyword id="KW-0540">Nuclease</keyword>
<keyword id="KW-0645">Protease</keyword>
<keyword id="KW-1185">Reference proteome</keyword>
<keyword id="KW-0677">Repeat</keyword>
<keyword id="KW-0688">Ribosomal frameshifting</keyword>
<keyword id="KW-0694">RNA-binding</keyword>
<keyword id="KW-0788">Thiol protease</keyword>
<keyword id="KW-0808">Transferase</keyword>
<keyword id="KW-0812">Transmembrane</keyword>
<keyword id="KW-1133">Transmembrane helix</keyword>
<keyword id="KW-0833">Ubl conjugation pathway</keyword>
<keyword id="KW-0899">Viral immunoevasion</keyword>
<keyword id="KW-0862">Zinc</keyword>
<keyword id="KW-0863">Zinc-finger</keyword>
<reference key="1">
    <citation type="submission" date="2012-11" db="EMBL/GenBank/DDBJ databases">
        <title>The phylogenetic status and pathogenicity of a new isolate of Metarhizium sp. from a fruit beetle larvae in Japan.</title>
        <authorList>
            <person name="Nishi O."/>
            <person name="Iiyama K."/>
            <person name="Yasunaga-Aoki C."/>
            <person name="Shimizu S."/>
        </authorList>
    </citation>
    <scope>NUCLEOTIDE SEQUENCE [GENOMIC RNA]</scope>
</reference>
<reference key="2">
    <citation type="journal article" date="2014" name="J. Virol.">
        <title>Catalytic function and substrate specificity of the papain-like protease domain of nsp3 from the Middle East respiratory syndrome coronavirus.</title>
        <authorList>
            <person name="Baez-Santos Y.M."/>
            <person name="Mielech A.M."/>
            <person name="Deng X."/>
            <person name="Baker S."/>
            <person name="Mesecar A.D."/>
        </authorList>
    </citation>
    <scope>FUNCTION (PAPAIN-LIKE PROTEINASE)</scope>
</reference>
<reference key="3">
    <citation type="journal article" date="2015" name="J. Virol.">
        <title>Middle east respiratory syndrome coronavirus nsp1 inhibits host gene expression by selectively targeting mRNAs transcribed in the nucleus while sparing mRNAs of cytoplasmic origin.</title>
        <authorList>
            <person name="Lokugamage K.G."/>
            <person name="Narayanan K."/>
            <person name="Nakagawa K."/>
            <person name="Terasaki K."/>
            <person name="Ramirez S.I."/>
            <person name="Tseng C.T."/>
            <person name="Makino S."/>
        </authorList>
    </citation>
    <scope>FUNCTION (NSP1)</scope>
</reference>